<organism>
    <name type="scientific">Mannheimia succiniciproducens (strain KCTC 0769BP / MBEL55E)</name>
    <dbReference type="NCBI Taxonomy" id="221988"/>
    <lineage>
        <taxon>Bacteria</taxon>
        <taxon>Pseudomonadati</taxon>
        <taxon>Pseudomonadota</taxon>
        <taxon>Gammaproteobacteria</taxon>
        <taxon>Pasteurellales</taxon>
        <taxon>Pasteurellaceae</taxon>
        <taxon>Basfia</taxon>
    </lineage>
</organism>
<name>CMOA_MANSM</name>
<accession>Q65UP7</accession>
<feature type="chain" id="PRO_0000314345" description="Carboxy-S-adenosyl-L-methionine synthase">
    <location>
        <begin position="1"/>
        <end position="241"/>
    </location>
</feature>
<feature type="binding site" evidence="1">
    <location>
        <position position="38"/>
    </location>
    <ligand>
        <name>S-adenosyl-L-methionine</name>
        <dbReference type="ChEBI" id="CHEBI:59789"/>
    </ligand>
</feature>
<feature type="binding site" evidence="1">
    <location>
        <begin position="63"/>
        <end position="65"/>
    </location>
    <ligand>
        <name>S-adenosyl-L-methionine</name>
        <dbReference type="ChEBI" id="CHEBI:59789"/>
    </ligand>
</feature>
<feature type="binding site" evidence="1">
    <location>
        <begin position="88"/>
        <end position="89"/>
    </location>
    <ligand>
        <name>S-adenosyl-L-methionine</name>
        <dbReference type="ChEBI" id="CHEBI:59789"/>
    </ligand>
</feature>
<feature type="binding site" evidence="1">
    <location>
        <begin position="116"/>
        <end position="117"/>
    </location>
    <ligand>
        <name>S-adenosyl-L-methionine</name>
        <dbReference type="ChEBI" id="CHEBI:59789"/>
    </ligand>
</feature>
<feature type="binding site" evidence="1">
    <location>
        <position position="131"/>
    </location>
    <ligand>
        <name>S-adenosyl-L-methionine</name>
        <dbReference type="ChEBI" id="CHEBI:59789"/>
    </ligand>
</feature>
<feature type="binding site" evidence="1">
    <location>
        <position position="198"/>
    </location>
    <ligand>
        <name>S-adenosyl-L-methionine</name>
        <dbReference type="ChEBI" id="CHEBI:59789"/>
    </ligand>
</feature>
<reference key="1">
    <citation type="journal article" date="2004" name="Nat. Biotechnol.">
        <title>The genome sequence of the capnophilic rumen bacterium Mannheimia succiniciproducens.</title>
        <authorList>
            <person name="Hong S.H."/>
            <person name="Kim J.S."/>
            <person name="Lee S.Y."/>
            <person name="In Y.H."/>
            <person name="Choi S.S."/>
            <person name="Rih J.-K."/>
            <person name="Kim C.H."/>
            <person name="Jeong H."/>
            <person name="Hur C.G."/>
            <person name="Kim J.J."/>
        </authorList>
    </citation>
    <scope>NUCLEOTIDE SEQUENCE [LARGE SCALE GENOMIC DNA]</scope>
    <source>
        <strain>KCTC 0769BP / MBEL55E</strain>
    </source>
</reference>
<keyword id="KW-0949">S-adenosyl-L-methionine</keyword>
<keyword id="KW-0808">Transferase</keyword>
<proteinExistence type="inferred from homology"/>
<dbReference type="EC" id="2.1.3.-" evidence="1"/>
<dbReference type="EMBL" id="AE016827">
    <property type="protein sequence ID" value="AAU37313.1"/>
    <property type="molecule type" value="Genomic_DNA"/>
</dbReference>
<dbReference type="RefSeq" id="WP_011199885.1">
    <property type="nucleotide sequence ID" value="NC_006300.1"/>
</dbReference>
<dbReference type="SMR" id="Q65UP7"/>
<dbReference type="STRING" id="221988.MS0706"/>
<dbReference type="KEGG" id="msu:MS0706"/>
<dbReference type="eggNOG" id="COG4106">
    <property type="taxonomic scope" value="Bacteria"/>
</dbReference>
<dbReference type="HOGENOM" id="CLU_078475_0_0_6"/>
<dbReference type="OrthoDB" id="9779941at2"/>
<dbReference type="Proteomes" id="UP000000607">
    <property type="component" value="Chromosome"/>
</dbReference>
<dbReference type="GO" id="GO:0016743">
    <property type="term" value="F:carboxyl- or carbamoyltransferase activity"/>
    <property type="evidence" value="ECO:0007669"/>
    <property type="project" value="UniProtKB-UniRule"/>
</dbReference>
<dbReference type="GO" id="GO:1904047">
    <property type="term" value="F:S-adenosyl-L-methionine binding"/>
    <property type="evidence" value="ECO:0007669"/>
    <property type="project" value="UniProtKB-UniRule"/>
</dbReference>
<dbReference type="GO" id="GO:0002098">
    <property type="term" value="P:tRNA wobble uridine modification"/>
    <property type="evidence" value="ECO:0007669"/>
    <property type="project" value="InterPro"/>
</dbReference>
<dbReference type="CDD" id="cd02440">
    <property type="entry name" value="AdoMet_MTases"/>
    <property type="match status" value="1"/>
</dbReference>
<dbReference type="Gene3D" id="3.40.50.150">
    <property type="entry name" value="Vaccinia Virus protein VP39"/>
    <property type="match status" value="1"/>
</dbReference>
<dbReference type="HAMAP" id="MF_01589">
    <property type="entry name" value="Cx_SAM_synthase"/>
    <property type="match status" value="1"/>
</dbReference>
<dbReference type="InterPro" id="IPR005271">
    <property type="entry name" value="CmoA"/>
</dbReference>
<dbReference type="InterPro" id="IPR041698">
    <property type="entry name" value="Methyltransf_25"/>
</dbReference>
<dbReference type="InterPro" id="IPR029063">
    <property type="entry name" value="SAM-dependent_MTases_sf"/>
</dbReference>
<dbReference type="NCBIfam" id="TIGR00740">
    <property type="entry name" value="carboxy-S-adenosyl-L-methionine synthase CmoA"/>
    <property type="match status" value="1"/>
</dbReference>
<dbReference type="NCBIfam" id="NF011995">
    <property type="entry name" value="PRK15451.1"/>
    <property type="match status" value="1"/>
</dbReference>
<dbReference type="PANTHER" id="PTHR43861:SF2">
    <property type="entry name" value="CARBOXY-S-ADENOSYL-L-METHIONINE SYNTHASE"/>
    <property type="match status" value="1"/>
</dbReference>
<dbReference type="PANTHER" id="PTHR43861">
    <property type="entry name" value="TRANS-ACONITATE 2-METHYLTRANSFERASE-RELATED"/>
    <property type="match status" value="1"/>
</dbReference>
<dbReference type="Pfam" id="PF13649">
    <property type="entry name" value="Methyltransf_25"/>
    <property type="match status" value="1"/>
</dbReference>
<dbReference type="PIRSF" id="PIRSF006325">
    <property type="entry name" value="MeTrfase_bac"/>
    <property type="match status" value="1"/>
</dbReference>
<dbReference type="SUPFAM" id="SSF53335">
    <property type="entry name" value="S-adenosyl-L-methionine-dependent methyltransferases"/>
    <property type="match status" value="1"/>
</dbReference>
<comment type="function">
    <text evidence="1">Catalyzes the conversion of S-adenosyl-L-methionine (SAM) to carboxy-S-adenosyl-L-methionine (Cx-SAM).</text>
</comment>
<comment type="catalytic activity">
    <reaction evidence="1">
        <text>prephenate + S-adenosyl-L-methionine = carboxy-S-adenosyl-L-methionine + 3-phenylpyruvate + H2O</text>
        <dbReference type="Rhea" id="RHEA:51692"/>
        <dbReference type="ChEBI" id="CHEBI:15377"/>
        <dbReference type="ChEBI" id="CHEBI:18005"/>
        <dbReference type="ChEBI" id="CHEBI:29934"/>
        <dbReference type="ChEBI" id="CHEBI:59789"/>
        <dbReference type="ChEBI" id="CHEBI:134278"/>
    </reaction>
</comment>
<comment type="subunit">
    <text evidence="1">Homodimer.</text>
</comment>
<comment type="similarity">
    <text evidence="1">Belongs to the class I-like SAM-binding methyltransferase superfamily. Cx-SAM synthase family.</text>
</comment>
<evidence type="ECO:0000255" key="1">
    <source>
        <dbReference type="HAMAP-Rule" id="MF_01589"/>
    </source>
</evidence>
<sequence>MSKDTIFSTPIEKLGDFTFDENVAEVFPDMIQRSVPGYSNIITAIGMLAERFVTADSNVYDLGCSRGAATLSARRNIKQANVKIIGVDNSQPMAERARQHIHAYHSEIPVEILCDDIRNIAIENASMVILNFTLQFLPPEDRRALLEKIYRGLNQGGLLVLSEKFRFEDETINNLLIDLHHTFKRANGYSELEVSQKRAALENVMRIDSINTHKVRLKNVGFSHVELWFQCFNFGSMIAIK</sequence>
<gene>
    <name evidence="1" type="primary">cmoA</name>
    <name type="ordered locus">MS0706</name>
</gene>
<protein>
    <recommendedName>
        <fullName evidence="1">Carboxy-S-adenosyl-L-methionine synthase</fullName>
        <shortName evidence="1">Cx-SAM synthase</shortName>
        <ecNumber evidence="1">2.1.3.-</ecNumber>
    </recommendedName>
</protein>